<feature type="chain" id="PRO_0000213960" description="Ubiquitin carboxyl-terminal hydrolase RPN11">
    <location>
        <begin position="1"/>
        <end position="306"/>
    </location>
</feature>
<feature type="domain" description="MPN" evidence="1">
    <location>
        <begin position="27"/>
        <end position="162"/>
    </location>
</feature>
<feature type="region of interest" description="Disordered" evidence="2">
    <location>
        <begin position="1"/>
        <end position="20"/>
    </location>
</feature>
<feature type="short sequence motif" description="JAMM motif" evidence="1">
    <location>
        <begin position="109"/>
        <end position="122"/>
    </location>
</feature>
<feature type="binding site" evidence="1">
    <location>
        <position position="109"/>
    </location>
    <ligand>
        <name>Zn(2+)</name>
        <dbReference type="ChEBI" id="CHEBI:29105"/>
        <note>catalytic</note>
    </ligand>
</feature>
<feature type="binding site" evidence="1">
    <location>
        <position position="111"/>
    </location>
    <ligand>
        <name>Zn(2+)</name>
        <dbReference type="ChEBI" id="CHEBI:29105"/>
        <note>catalytic</note>
    </ligand>
</feature>
<feature type="binding site" evidence="1">
    <location>
        <position position="122"/>
    </location>
    <ligand>
        <name>Zn(2+)</name>
        <dbReference type="ChEBI" id="CHEBI:29105"/>
        <note>catalytic</note>
    </ligand>
</feature>
<feature type="modified residue" description="N-acetylmethionine" evidence="4">
    <location>
        <position position="1"/>
    </location>
</feature>
<feature type="sequence variant" description="In strain: NRRL Y-53.">
    <original>K</original>
    <variation>Q</variation>
    <location>
        <position position="208"/>
    </location>
</feature>
<feature type="sequence variant" description="In strain: NRRL Y-53.">
    <original>A</original>
    <variation>T</variation>
    <location>
        <position position="239"/>
    </location>
</feature>
<feature type="sequence variant" description="In strain: NRRL Y-53.">
    <original>T</original>
    <variation>S</variation>
    <location>
        <position position="262"/>
    </location>
</feature>
<feature type="sequence variant" description="In strain: NRRL Y-53.">
    <original>LS</original>
    <variation>IF</variation>
    <location>
        <begin position="280"/>
        <end position="281"/>
    </location>
</feature>
<feature type="mutagenesis site" description="Stabilizes ubiquitin pathway substrates; when associated wirh Ala-111." evidence="3">
    <original>H</original>
    <variation>A</variation>
    <location>
        <position position="109"/>
    </location>
</feature>
<feature type="mutagenesis site" description="Stabilizes ubiquitin pathway substrates; when associated wirh Ala-109." evidence="3">
    <original>H</original>
    <variation>A</variation>
    <location>
        <position position="111"/>
    </location>
</feature>
<feature type="strand" evidence="15">
    <location>
        <begin position="26"/>
        <end position="30"/>
    </location>
</feature>
<feature type="helix" evidence="15">
    <location>
        <begin position="31"/>
        <end position="44"/>
    </location>
</feature>
<feature type="strand" evidence="15">
    <location>
        <begin position="50"/>
        <end position="59"/>
    </location>
</feature>
<feature type="strand" evidence="15">
    <location>
        <begin position="62"/>
        <end position="70"/>
    </location>
</feature>
<feature type="strand" evidence="14">
    <location>
        <begin position="72"/>
        <end position="76"/>
    </location>
</feature>
<feature type="helix" evidence="12">
    <location>
        <begin position="80"/>
        <end position="82"/>
    </location>
</feature>
<feature type="helix" evidence="15">
    <location>
        <begin position="85"/>
        <end position="97"/>
    </location>
</feature>
<feature type="strand" evidence="15">
    <location>
        <begin position="103"/>
        <end position="110"/>
    </location>
</feature>
<feature type="turn" evidence="15">
    <location>
        <begin position="112"/>
        <end position="114"/>
    </location>
</feature>
<feature type="helix" evidence="15">
    <location>
        <begin position="120"/>
        <end position="132"/>
    </location>
</feature>
<feature type="strand" evidence="15">
    <location>
        <begin position="137"/>
        <end position="142"/>
    </location>
</feature>
<feature type="helix" evidence="15">
    <location>
        <begin position="145"/>
        <end position="148"/>
    </location>
</feature>
<feature type="strand" evidence="15">
    <location>
        <begin position="152"/>
        <end position="158"/>
    </location>
</feature>
<feature type="helix" evidence="13">
    <location>
        <begin position="162"/>
        <end position="166"/>
    </location>
</feature>
<feature type="helix" evidence="13">
    <location>
        <begin position="182"/>
        <end position="194"/>
    </location>
</feature>
<feature type="strand" evidence="15">
    <location>
        <begin position="196"/>
        <end position="204"/>
    </location>
</feature>
<feature type="helix" evidence="15">
    <location>
        <begin position="207"/>
        <end position="221"/>
    </location>
</feature>
<feature type="helix" evidence="11">
    <location>
        <begin position="230"/>
        <end position="260"/>
    </location>
</feature>
<feature type="helix" evidence="11">
    <location>
        <begin position="263"/>
        <end position="270"/>
    </location>
</feature>
<feature type="helix" evidence="11">
    <location>
        <begin position="276"/>
        <end position="305"/>
    </location>
</feature>
<organism>
    <name type="scientific">Saccharomyces cerevisiae (strain ATCC 204508 / S288c)</name>
    <name type="common">Baker's yeast</name>
    <dbReference type="NCBI Taxonomy" id="559292"/>
    <lineage>
        <taxon>Eukaryota</taxon>
        <taxon>Fungi</taxon>
        <taxon>Dikarya</taxon>
        <taxon>Ascomycota</taxon>
        <taxon>Saccharomycotina</taxon>
        <taxon>Saccharomycetes</taxon>
        <taxon>Saccharomycetales</taxon>
        <taxon>Saccharomycetaceae</taxon>
        <taxon>Saccharomyces</taxon>
    </lineage>
</organism>
<sequence length="306" mass="34398">MERLQRLMMNSKVGSADTGRDDTKETVYISSIALLKMLKHGRAGVPMEVMGLMLGEFVDDYTVNVVDVFAMPQSGTGVSVEAVDDVFQAKMMDMLKQTGRDQMVVGWYHSHPGFGCWLSSVDVNTQKSFEQLNSRAVAVVVDPIQSVKGKVVIDAFRLIDTGALINNLEPRQTTSNTGLLNKANIQALIHGLNRHYYSLNIDYHKTAKETKMLMNLHKEQWQSGLKMYDYEEKEESNLAATKSMVKIAEQYSKRIEEEKELTEEELKTRYVGRQDPKKHLSETADETLENNIVSVLTAGVNSVAIK</sequence>
<proteinExistence type="evidence at protein level"/>
<gene>
    <name type="primary">RPN11</name>
    <name type="synonym">MPR1</name>
    <name type="ordered locus">YFR004W</name>
</gene>
<name>RPN11_YEAST</name>
<evidence type="ECO:0000255" key="1">
    <source>
        <dbReference type="PROSITE-ProRule" id="PRU01182"/>
    </source>
</evidence>
<evidence type="ECO:0000256" key="2">
    <source>
        <dbReference type="SAM" id="MobiDB-lite"/>
    </source>
</evidence>
<evidence type="ECO:0000269" key="3">
    <source>
    </source>
</evidence>
<evidence type="ECO:0000269" key="4">
    <source>
    </source>
</evidence>
<evidence type="ECO:0000269" key="5">
    <source>
    </source>
</evidence>
<evidence type="ECO:0000269" key="6">
    <source>
    </source>
</evidence>
<evidence type="ECO:0000269" key="7">
    <source>
    </source>
</evidence>
<evidence type="ECO:0000269" key="8">
    <source>
    </source>
</evidence>
<evidence type="ECO:0000269" key="9">
    <source>
    </source>
</evidence>
<evidence type="ECO:0000305" key="10"/>
<evidence type="ECO:0007829" key="11">
    <source>
        <dbReference type="PDB" id="3JCK"/>
    </source>
</evidence>
<evidence type="ECO:0007829" key="12">
    <source>
        <dbReference type="PDB" id="4O8Y"/>
    </source>
</evidence>
<evidence type="ECO:0007829" key="13">
    <source>
        <dbReference type="PDB" id="4OCM"/>
    </source>
</evidence>
<evidence type="ECO:0007829" key="14">
    <source>
        <dbReference type="PDB" id="5U4P"/>
    </source>
</evidence>
<evidence type="ECO:0007829" key="15">
    <source>
        <dbReference type="PDB" id="5W83"/>
    </source>
</evidence>
<dbReference type="EC" id="3.4.19.12"/>
<dbReference type="EMBL" id="X79561">
    <property type="protein sequence ID" value="CAA56098.1"/>
    <property type="molecule type" value="Genomic_DNA"/>
</dbReference>
<dbReference type="EMBL" id="AY152546">
    <property type="protein sequence ID" value="AAN77865.1"/>
    <property type="molecule type" value="Genomic_DNA"/>
</dbReference>
<dbReference type="EMBL" id="D50617">
    <property type="protein sequence ID" value="BAA09243.1"/>
    <property type="molecule type" value="Genomic_DNA"/>
</dbReference>
<dbReference type="EMBL" id="AY692755">
    <property type="protein sequence ID" value="AAT92774.1"/>
    <property type="molecule type" value="Genomic_DNA"/>
</dbReference>
<dbReference type="EMBL" id="BK006940">
    <property type="protein sequence ID" value="DAA12444.1"/>
    <property type="molecule type" value="Genomic_DNA"/>
</dbReference>
<dbReference type="PIR" id="S56259">
    <property type="entry name" value="S56259"/>
</dbReference>
<dbReference type="RefSeq" id="NP_116659.1">
    <property type="nucleotide sequence ID" value="NM_001179969.1"/>
</dbReference>
<dbReference type="PDB" id="3J47">
    <property type="method" value="EM"/>
    <property type="chains" value="V=230-298"/>
</dbReference>
<dbReference type="PDB" id="3JCK">
    <property type="method" value="EM"/>
    <property type="resolution" value="3.50 A"/>
    <property type="chains" value="G=1-306"/>
</dbReference>
<dbReference type="PDB" id="3JCO">
    <property type="method" value="EM"/>
    <property type="resolution" value="4.80 A"/>
    <property type="chains" value="V=1-306"/>
</dbReference>
<dbReference type="PDB" id="3JCP">
    <property type="method" value="EM"/>
    <property type="resolution" value="4.60 A"/>
    <property type="chains" value="V=1-306"/>
</dbReference>
<dbReference type="PDB" id="4CR2">
    <property type="method" value="EM"/>
    <property type="resolution" value="7.70 A"/>
    <property type="chains" value="V=1-306"/>
</dbReference>
<dbReference type="PDB" id="4CR3">
    <property type="method" value="EM"/>
    <property type="resolution" value="9.30 A"/>
    <property type="chains" value="V=1-306"/>
</dbReference>
<dbReference type="PDB" id="4CR4">
    <property type="method" value="EM"/>
    <property type="resolution" value="8.80 A"/>
    <property type="chains" value="V=1-306"/>
</dbReference>
<dbReference type="PDB" id="4O8X">
    <property type="method" value="X-ray"/>
    <property type="resolution" value="1.99 A"/>
    <property type="chains" value="B=2-239"/>
</dbReference>
<dbReference type="PDB" id="4O8Y">
    <property type="method" value="X-ray"/>
    <property type="resolution" value="1.95 A"/>
    <property type="chains" value="B=2-239"/>
</dbReference>
<dbReference type="PDB" id="4OCL">
    <property type="method" value="X-ray"/>
    <property type="resolution" value="2.40 A"/>
    <property type="chains" value="B/E=1-220"/>
</dbReference>
<dbReference type="PDB" id="4OCM">
    <property type="method" value="X-ray"/>
    <property type="resolution" value="1.99 A"/>
    <property type="chains" value="B/E=1-220"/>
</dbReference>
<dbReference type="PDB" id="4OCN">
    <property type="method" value="X-ray"/>
    <property type="resolution" value="2.25 A"/>
    <property type="chains" value="B/E=1-220"/>
</dbReference>
<dbReference type="PDB" id="4OWP">
    <property type="method" value="X-ray"/>
    <property type="resolution" value="2.35 A"/>
    <property type="chains" value="B=2-229"/>
</dbReference>
<dbReference type="PDB" id="5A5B">
    <property type="method" value="EM"/>
    <property type="resolution" value="9.50 A"/>
    <property type="chains" value="V=1-306"/>
</dbReference>
<dbReference type="PDB" id="5MPB">
    <property type="method" value="EM"/>
    <property type="resolution" value="7.80 A"/>
    <property type="chains" value="V=1-306"/>
</dbReference>
<dbReference type="PDB" id="5MPC">
    <property type="method" value="EM"/>
    <property type="resolution" value="7.70 A"/>
    <property type="chains" value="V=1-306"/>
</dbReference>
<dbReference type="PDB" id="5MPD">
    <property type="method" value="EM"/>
    <property type="resolution" value="4.10 A"/>
    <property type="chains" value="V=1-306"/>
</dbReference>
<dbReference type="PDB" id="5MPE">
    <property type="method" value="EM"/>
    <property type="resolution" value="4.50 A"/>
    <property type="chains" value="V=1-306"/>
</dbReference>
<dbReference type="PDB" id="5U4P">
    <property type="method" value="X-ray"/>
    <property type="resolution" value="2.50 A"/>
    <property type="chains" value="B=2-219"/>
</dbReference>
<dbReference type="PDB" id="5W83">
    <property type="method" value="X-ray"/>
    <property type="resolution" value="1.55 A"/>
    <property type="chains" value="B=1-222"/>
</dbReference>
<dbReference type="PDB" id="5WVI">
    <property type="method" value="EM"/>
    <property type="resolution" value="6.30 A"/>
    <property type="chains" value="V=1-306"/>
</dbReference>
<dbReference type="PDB" id="5WVK">
    <property type="method" value="EM"/>
    <property type="resolution" value="4.20 A"/>
    <property type="chains" value="V=1-306"/>
</dbReference>
<dbReference type="PDB" id="6EF3">
    <property type="method" value="EM"/>
    <property type="resolution" value="4.17 A"/>
    <property type="chains" value="r=1-306"/>
</dbReference>
<dbReference type="PDB" id="6FVT">
    <property type="method" value="EM"/>
    <property type="resolution" value="4.10 A"/>
    <property type="chains" value="V=18-306"/>
</dbReference>
<dbReference type="PDB" id="6FVU">
    <property type="method" value="EM"/>
    <property type="resolution" value="4.50 A"/>
    <property type="chains" value="V=18-306"/>
</dbReference>
<dbReference type="PDB" id="6FVV">
    <property type="method" value="EM"/>
    <property type="resolution" value="5.40 A"/>
    <property type="chains" value="V=18-306"/>
</dbReference>
<dbReference type="PDB" id="6FVW">
    <property type="method" value="EM"/>
    <property type="resolution" value="4.50 A"/>
    <property type="chains" value="V=18-306"/>
</dbReference>
<dbReference type="PDB" id="6FVX">
    <property type="method" value="EM"/>
    <property type="resolution" value="4.90 A"/>
    <property type="chains" value="V=18-306"/>
</dbReference>
<dbReference type="PDB" id="6FVY">
    <property type="method" value="EM"/>
    <property type="resolution" value="6.10 A"/>
    <property type="chains" value="V=18-306"/>
</dbReference>
<dbReference type="PDB" id="6J2C">
    <property type="method" value="EM"/>
    <property type="resolution" value="7.00 A"/>
    <property type="chains" value="V=1-306"/>
</dbReference>
<dbReference type="PDB" id="6J2N">
    <property type="method" value="EM"/>
    <property type="resolution" value="7.50 A"/>
    <property type="chains" value="V=1-306"/>
</dbReference>
<dbReference type="PDB" id="6J2Q">
    <property type="method" value="EM"/>
    <property type="resolution" value="3.80 A"/>
    <property type="chains" value="V=1-306"/>
</dbReference>
<dbReference type="PDB" id="6J2X">
    <property type="method" value="EM"/>
    <property type="resolution" value="3.80 A"/>
    <property type="chains" value="V=1-306"/>
</dbReference>
<dbReference type="PDB" id="6J30">
    <property type="method" value="EM"/>
    <property type="resolution" value="4.50 A"/>
    <property type="chains" value="V=1-306"/>
</dbReference>
<dbReference type="PDB" id="7QO3">
    <property type="method" value="EM"/>
    <property type="resolution" value="6.10 A"/>
    <property type="chains" value="V=1-306"/>
</dbReference>
<dbReference type="PDB" id="7QO5">
    <property type="method" value="EM"/>
    <property type="resolution" value="6.00 A"/>
    <property type="chains" value="V=1-306"/>
</dbReference>
<dbReference type="PDBsum" id="3J47"/>
<dbReference type="PDBsum" id="3JCK"/>
<dbReference type="PDBsum" id="3JCO"/>
<dbReference type="PDBsum" id="3JCP"/>
<dbReference type="PDBsum" id="4CR2"/>
<dbReference type="PDBsum" id="4CR3"/>
<dbReference type="PDBsum" id="4CR4"/>
<dbReference type="PDBsum" id="4O8X"/>
<dbReference type="PDBsum" id="4O8Y"/>
<dbReference type="PDBsum" id="4OCL"/>
<dbReference type="PDBsum" id="4OCM"/>
<dbReference type="PDBsum" id="4OCN"/>
<dbReference type="PDBsum" id="4OWP"/>
<dbReference type="PDBsum" id="5A5B"/>
<dbReference type="PDBsum" id="5MPB"/>
<dbReference type="PDBsum" id="5MPC"/>
<dbReference type="PDBsum" id="5MPD"/>
<dbReference type="PDBsum" id="5MPE"/>
<dbReference type="PDBsum" id="5U4P"/>
<dbReference type="PDBsum" id="5W83"/>
<dbReference type="PDBsum" id="5WVI"/>
<dbReference type="PDBsum" id="5WVK"/>
<dbReference type="PDBsum" id="6EF3"/>
<dbReference type="PDBsum" id="6FVT"/>
<dbReference type="PDBsum" id="6FVU"/>
<dbReference type="PDBsum" id="6FVV"/>
<dbReference type="PDBsum" id="6FVW"/>
<dbReference type="PDBsum" id="6FVX"/>
<dbReference type="PDBsum" id="6FVY"/>
<dbReference type="PDBsum" id="6J2C"/>
<dbReference type="PDBsum" id="6J2N"/>
<dbReference type="PDBsum" id="6J2Q"/>
<dbReference type="PDBsum" id="6J2X"/>
<dbReference type="PDBsum" id="6J30"/>
<dbReference type="PDBsum" id="7QO3"/>
<dbReference type="PDBsum" id="7QO5"/>
<dbReference type="EMDB" id="EMD-14082"/>
<dbReference type="EMDB" id="EMD-14084"/>
<dbReference type="EMDB" id="EMD-3136"/>
<dbReference type="EMDB" id="EMD-3536"/>
<dbReference type="EMDB" id="EMD-3537"/>
<dbReference type="EMDB" id="EMD-4321"/>
<dbReference type="EMDB" id="EMD-4322"/>
<dbReference type="EMDB" id="EMD-4323"/>
<dbReference type="EMDB" id="EMD-4324"/>
<dbReference type="EMDB" id="EMD-6693"/>
<dbReference type="EMDB" id="EMD-6694"/>
<dbReference type="EMDB" id="EMD-9045"/>
<dbReference type="EMDB" id="EMD-9769"/>
<dbReference type="EMDB" id="EMD-9770"/>
<dbReference type="EMDB" id="EMD-9771"/>
<dbReference type="EMDB" id="EMD-9772"/>
<dbReference type="EMDB" id="EMD-9773"/>
<dbReference type="SMR" id="P43588"/>
<dbReference type="BioGRID" id="31152">
    <property type="interactions" value="1237"/>
</dbReference>
<dbReference type="ComplexPortal" id="CPX-2262">
    <property type="entry name" value="26S proteasome complex"/>
</dbReference>
<dbReference type="DIP" id="DIP-1573N"/>
<dbReference type="FunCoup" id="P43588">
    <property type="interactions" value="1611"/>
</dbReference>
<dbReference type="IntAct" id="P43588">
    <property type="interactions" value="46"/>
</dbReference>
<dbReference type="MINT" id="P43588"/>
<dbReference type="STRING" id="4932.YFR004W"/>
<dbReference type="MEROPS" id="M67.001"/>
<dbReference type="iPTMnet" id="P43588"/>
<dbReference type="PaxDb" id="4932-YFR004W"/>
<dbReference type="PeptideAtlas" id="P43588"/>
<dbReference type="ABCD" id="P43588">
    <property type="antibodies" value="1 sequenced antibody"/>
</dbReference>
<dbReference type="EnsemblFungi" id="YFR004W_mRNA">
    <property type="protein sequence ID" value="YFR004W"/>
    <property type="gene ID" value="YFR004W"/>
</dbReference>
<dbReference type="GeneID" id="850554"/>
<dbReference type="KEGG" id="sce:YFR004W"/>
<dbReference type="AGR" id="SGD:S000001900"/>
<dbReference type="SGD" id="S000001900">
    <property type="gene designation" value="RPN11"/>
</dbReference>
<dbReference type="VEuPathDB" id="FungiDB:YFR004W"/>
<dbReference type="eggNOG" id="KOG1555">
    <property type="taxonomic scope" value="Eukaryota"/>
</dbReference>
<dbReference type="GeneTree" id="ENSGT00730000111116"/>
<dbReference type="HOGENOM" id="CLU_052991_0_1_1"/>
<dbReference type="InParanoid" id="P43588"/>
<dbReference type="OMA" id="KTGRHEM"/>
<dbReference type="OrthoDB" id="605656at2759"/>
<dbReference type="BioCyc" id="YEAST:G3O-30457-MONOMER"/>
<dbReference type="Reactome" id="R-SCE-1236978">
    <property type="pathway name" value="Cross-presentation of soluble exogenous antigens (endosomes)"/>
</dbReference>
<dbReference type="Reactome" id="R-SCE-5668541">
    <property type="pathway name" value="TNFR2 non-canonical NF-kB pathway"/>
</dbReference>
<dbReference type="Reactome" id="R-SCE-5687128">
    <property type="pathway name" value="MAPK6/MAPK4 signaling"/>
</dbReference>
<dbReference type="Reactome" id="R-SCE-5689880">
    <property type="pathway name" value="Ub-specific processing proteases"/>
</dbReference>
<dbReference type="Reactome" id="R-SCE-5689901">
    <property type="pathway name" value="Metalloprotease DUBs"/>
</dbReference>
<dbReference type="Reactome" id="R-SCE-6798695">
    <property type="pathway name" value="Neutrophil degranulation"/>
</dbReference>
<dbReference type="Reactome" id="R-SCE-68949">
    <property type="pathway name" value="Orc1 removal from chromatin"/>
</dbReference>
<dbReference type="Reactome" id="R-SCE-69017">
    <property type="pathway name" value="CDK-mediated phosphorylation and removal of Cdc6"/>
</dbReference>
<dbReference type="Reactome" id="R-SCE-69601">
    <property type="pathway name" value="Ubiquitin Mediated Degradation of Phosphorylated Cdc25A"/>
</dbReference>
<dbReference type="Reactome" id="R-SCE-8854050">
    <property type="pathway name" value="FBXL7 down-regulates AURKA during mitotic entry and in early mitosis"/>
</dbReference>
<dbReference type="Reactome" id="R-SCE-8948751">
    <property type="pathway name" value="Regulation of PTEN stability and activity"/>
</dbReference>
<dbReference type="Reactome" id="R-SCE-8951664">
    <property type="pathway name" value="Neddylation"/>
</dbReference>
<dbReference type="Reactome" id="R-SCE-9755511">
    <property type="pathway name" value="KEAP1-NFE2L2 pathway"/>
</dbReference>
<dbReference type="Reactome" id="R-SCE-983168">
    <property type="pathway name" value="Antigen processing: Ubiquitination &amp; Proteasome degradation"/>
</dbReference>
<dbReference type="Reactome" id="R-SCE-9907900">
    <property type="pathway name" value="Proteasome assembly"/>
</dbReference>
<dbReference type="BioGRID-ORCS" id="850554">
    <property type="hits" value="7 hits in 10 CRISPR screens"/>
</dbReference>
<dbReference type="EvolutionaryTrace" id="P43588"/>
<dbReference type="PRO" id="PR:P43588"/>
<dbReference type="Proteomes" id="UP000002311">
    <property type="component" value="Chromosome VI"/>
</dbReference>
<dbReference type="RNAct" id="P43588">
    <property type="molecule type" value="protein"/>
</dbReference>
<dbReference type="GO" id="GO:0005829">
    <property type="term" value="C:cytosol"/>
    <property type="evidence" value="ECO:0000314"/>
    <property type="project" value="SGD"/>
</dbReference>
<dbReference type="GO" id="GO:0005739">
    <property type="term" value="C:mitochondrion"/>
    <property type="evidence" value="ECO:0000314"/>
    <property type="project" value="SGD"/>
</dbReference>
<dbReference type="GO" id="GO:0005634">
    <property type="term" value="C:nucleus"/>
    <property type="evidence" value="ECO:0000314"/>
    <property type="project" value="SGD"/>
</dbReference>
<dbReference type="GO" id="GO:0000502">
    <property type="term" value="C:proteasome complex"/>
    <property type="evidence" value="ECO:0000353"/>
    <property type="project" value="ComplexPortal"/>
</dbReference>
<dbReference type="GO" id="GO:0008541">
    <property type="term" value="C:proteasome regulatory particle, lid subcomplex"/>
    <property type="evidence" value="ECO:0000314"/>
    <property type="project" value="SGD"/>
</dbReference>
<dbReference type="GO" id="GO:0034515">
    <property type="term" value="C:proteasome storage granule"/>
    <property type="evidence" value="ECO:0000314"/>
    <property type="project" value="SGD"/>
</dbReference>
<dbReference type="GO" id="GO:0004843">
    <property type="term" value="F:cysteine-type deubiquitinase activity"/>
    <property type="evidence" value="ECO:0007669"/>
    <property type="project" value="UniProtKB-EC"/>
</dbReference>
<dbReference type="GO" id="GO:0046872">
    <property type="term" value="F:metal ion binding"/>
    <property type="evidence" value="ECO:0007669"/>
    <property type="project" value="UniProtKB-KW"/>
</dbReference>
<dbReference type="GO" id="GO:0140492">
    <property type="term" value="F:metal-dependent deubiquitinase activity"/>
    <property type="evidence" value="ECO:0000314"/>
    <property type="project" value="SGD"/>
</dbReference>
<dbReference type="GO" id="GO:0008237">
    <property type="term" value="F:metallopeptidase activity"/>
    <property type="evidence" value="ECO:0000250"/>
    <property type="project" value="SGD"/>
</dbReference>
<dbReference type="GO" id="GO:0070628">
    <property type="term" value="F:proteasome binding"/>
    <property type="evidence" value="ECO:0000318"/>
    <property type="project" value="GO_Central"/>
</dbReference>
<dbReference type="GO" id="GO:0000266">
    <property type="term" value="P:mitochondrial fission"/>
    <property type="evidence" value="ECO:0000315"/>
    <property type="project" value="SGD"/>
</dbReference>
<dbReference type="GO" id="GO:0016559">
    <property type="term" value="P:peroxisome fission"/>
    <property type="evidence" value="ECO:0000315"/>
    <property type="project" value="SGD"/>
</dbReference>
<dbReference type="GO" id="GO:0043248">
    <property type="term" value="P:proteasome assembly"/>
    <property type="evidence" value="ECO:0000315"/>
    <property type="project" value="SGD"/>
</dbReference>
<dbReference type="GO" id="GO:1902906">
    <property type="term" value="P:proteasome storage granule assembly"/>
    <property type="evidence" value="ECO:0000315"/>
    <property type="project" value="SGD"/>
</dbReference>
<dbReference type="GO" id="GO:0043161">
    <property type="term" value="P:proteasome-mediated ubiquitin-dependent protein catabolic process"/>
    <property type="evidence" value="ECO:0000314"/>
    <property type="project" value="ComplexPortal"/>
</dbReference>
<dbReference type="GO" id="GO:0016579">
    <property type="term" value="P:protein deubiquitination"/>
    <property type="evidence" value="ECO:0000314"/>
    <property type="project" value="SGD"/>
</dbReference>
<dbReference type="CDD" id="cd08069">
    <property type="entry name" value="MPN_RPN11_CSN5"/>
    <property type="match status" value="1"/>
</dbReference>
<dbReference type="FunFam" id="3.40.140.10:FF:000001">
    <property type="entry name" value="26S proteasome non-ATPase regulatory subunit"/>
    <property type="match status" value="1"/>
</dbReference>
<dbReference type="Gene3D" id="3.40.140.10">
    <property type="entry name" value="Cytidine Deaminase, domain 2"/>
    <property type="match status" value="1"/>
</dbReference>
<dbReference type="InterPro" id="IPR000555">
    <property type="entry name" value="JAMM/MPN+_dom"/>
</dbReference>
<dbReference type="InterPro" id="IPR050242">
    <property type="entry name" value="JAMM_MPN+_peptidase_M67A"/>
</dbReference>
<dbReference type="InterPro" id="IPR037518">
    <property type="entry name" value="MPN"/>
</dbReference>
<dbReference type="InterPro" id="IPR056263">
    <property type="entry name" value="RPN11_C"/>
</dbReference>
<dbReference type="PANTHER" id="PTHR10410">
    <property type="entry name" value="EUKARYOTIC TRANSLATION INITIATION FACTOR 3 -RELATED"/>
    <property type="match status" value="1"/>
</dbReference>
<dbReference type="Pfam" id="PF01398">
    <property type="entry name" value="JAB"/>
    <property type="match status" value="1"/>
</dbReference>
<dbReference type="Pfam" id="PF23594">
    <property type="entry name" value="RPN11_C"/>
    <property type="match status" value="1"/>
</dbReference>
<dbReference type="SMART" id="SM00232">
    <property type="entry name" value="JAB_MPN"/>
    <property type="match status" value="1"/>
</dbReference>
<dbReference type="SUPFAM" id="SSF102712">
    <property type="entry name" value="JAB1/MPN domain"/>
    <property type="match status" value="1"/>
</dbReference>
<dbReference type="PROSITE" id="PS50249">
    <property type="entry name" value="MPN"/>
    <property type="match status" value="1"/>
</dbReference>
<keyword id="KW-0002">3D-structure</keyword>
<keyword id="KW-0007">Acetylation</keyword>
<keyword id="KW-0903">Direct protein sequencing</keyword>
<keyword id="KW-0378">Hydrolase</keyword>
<keyword id="KW-0479">Metal-binding</keyword>
<keyword id="KW-0482">Metalloprotease</keyword>
<keyword id="KW-0645">Protease</keyword>
<keyword id="KW-0647">Proteasome</keyword>
<keyword id="KW-1185">Reference proteome</keyword>
<keyword id="KW-0788">Thiol protease</keyword>
<keyword id="KW-0833">Ubl conjugation pathway</keyword>
<keyword id="KW-0862">Zinc</keyword>
<reference key="1">
    <citation type="journal article" date="1995" name="Gene">
        <title>A Saccharomyces cerevisiae gene essential for viability has been conserved in evolution.</title>
        <authorList>
            <person name="Rinaldi T."/>
            <person name="Bolotin-Fukuhara M."/>
            <person name="Frontali L."/>
        </authorList>
    </citation>
    <scope>NUCLEOTIDE SEQUENCE [GENOMIC DNA]</scope>
    <source>
        <strain>S288c / GRF88</strain>
    </source>
</reference>
<reference key="2">
    <citation type="submission" date="2002-09" db="EMBL/GenBank/DDBJ databases">
        <title>A putative naturally occurring allele of RPN11.</title>
        <authorList>
            <person name="Ambroggio X.I."/>
            <person name="Rees D.C."/>
            <person name="Deshaies R.J."/>
        </authorList>
    </citation>
    <scope>NUCLEOTIDE SEQUENCE [GENOMIC DNA]</scope>
    <source>
        <strain>ATCC 2601 / CBS 679 / DSM 3774 / NRRL Y-53</strain>
    </source>
</reference>
<reference key="3">
    <citation type="journal article" date="1995" name="Nat. Genet.">
        <title>Analysis of the nucleotide sequence of chromosome VI from Saccharomyces cerevisiae.</title>
        <authorList>
            <person name="Murakami Y."/>
            <person name="Naitou M."/>
            <person name="Hagiwara H."/>
            <person name="Shibata T."/>
            <person name="Ozawa M."/>
            <person name="Sasanuma S."/>
            <person name="Sasanuma M."/>
            <person name="Tsuchiya Y."/>
            <person name="Soeda E."/>
            <person name="Yokoyama K."/>
            <person name="Yamazaki M."/>
            <person name="Tashiro H."/>
            <person name="Eki T."/>
        </authorList>
    </citation>
    <scope>NUCLEOTIDE SEQUENCE [LARGE SCALE GENOMIC DNA]</scope>
    <source>
        <strain>ATCC 204508 / S288c</strain>
    </source>
</reference>
<reference key="4">
    <citation type="journal article" date="2014" name="G3 (Bethesda)">
        <title>The reference genome sequence of Saccharomyces cerevisiae: Then and now.</title>
        <authorList>
            <person name="Engel S.R."/>
            <person name="Dietrich F.S."/>
            <person name="Fisk D.G."/>
            <person name="Binkley G."/>
            <person name="Balakrishnan R."/>
            <person name="Costanzo M.C."/>
            <person name="Dwight S.S."/>
            <person name="Hitz B.C."/>
            <person name="Karra K."/>
            <person name="Nash R.S."/>
            <person name="Weng S."/>
            <person name="Wong E.D."/>
            <person name="Lloyd P."/>
            <person name="Skrzypek M.S."/>
            <person name="Miyasato S.R."/>
            <person name="Simison M."/>
            <person name="Cherry J.M."/>
        </authorList>
    </citation>
    <scope>GENOME REANNOTATION</scope>
    <source>
        <strain>ATCC 204508 / S288c</strain>
    </source>
</reference>
<reference key="5">
    <citation type="journal article" date="2007" name="Genome Res.">
        <title>Approaching a complete repository of sequence-verified protein-encoding clones for Saccharomyces cerevisiae.</title>
        <authorList>
            <person name="Hu Y."/>
            <person name="Rolfs A."/>
            <person name="Bhullar B."/>
            <person name="Murthy T.V.S."/>
            <person name="Zhu C."/>
            <person name="Berger M.F."/>
            <person name="Camargo A.A."/>
            <person name="Kelley F."/>
            <person name="McCarron S."/>
            <person name="Jepson D."/>
            <person name="Richardson A."/>
            <person name="Raphael J."/>
            <person name="Moreira D."/>
            <person name="Taycher E."/>
            <person name="Zuo D."/>
            <person name="Mohr S."/>
            <person name="Kane M.F."/>
            <person name="Williamson J."/>
            <person name="Simpson A.J.G."/>
            <person name="Bulyk M.L."/>
            <person name="Harlow E."/>
            <person name="Marsischky G."/>
            <person name="Kolodner R.D."/>
            <person name="LaBaer J."/>
        </authorList>
    </citation>
    <scope>NUCLEOTIDE SEQUENCE [GENOMIC DNA]</scope>
    <source>
        <strain>ATCC 204508 / S288c</strain>
    </source>
</reference>
<reference key="6">
    <citation type="journal article" date="2003" name="Arch. Biochem. Biophys.">
        <title>N-terminal modifications of the 19S regulatory particle subunits of the yeast proteasome.</title>
        <authorList>
            <person name="Kimura Y."/>
            <person name="Saeki Y."/>
            <person name="Yokosawa H."/>
            <person name="Polevoda B."/>
            <person name="Sherman F."/>
            <person name="Hirano H."/>
        </authorList>
    </citation>
    <scope>PROTEIN SEQUENCE OF 1-8</scope>
    <scope>ACETYLATION AT MET-1</scope>
</reference>
<reference key="7">
    <citation type="journal article" date="2002" name="Science">
        <title>Role of Rpn11 metalloprotease in deubiquitination and degradation by the 26S proteasome.</title>
        <authorList>
            <person name="Verma R."/>
            <person name="Aravind L."/>
            <person name="Oania R."/>
            <person name="McDonald W.H."/>
            <person name="Yates J.R."/>
            <person name="Koonin E.V."/>
            <person name="Deshaies R.J."/>
        </authorList>
    </citation>
    <scope>FUNCTION</scope>
    <scope>MUTAGENESIS OF HIS-109 AND HIS-111</scope>
</reference>
<reference key="8">
    <citation type="journal article" date="2003" name="Nature">
        <title>Global analysis of protein expression in yeast.</title>
        <authorList>
            <person name="Ghaemmaghami S."/>
            <person name="Huh W.-K."/>
            <person name="Bower K."/>
            <person name="Howson R.W."/>
            <person name="Belle A."/>
            <person name="Dephoure N."/>
            <person name="O'Shea E.K."/>
            <person name="Weissman J.S."/>
        </authorList>
    </citation>
    <scope>LEVEL OF PROTEIN EXPRESSION [LARGE SCALE ANALYSIS]</scope>
</reference>
<reference key="9">
    <citation type="journal article" date="2011" name="J. Biol. Chem.">
        <title>Sts1 plays a key role in targeting proteasomes to the nucleus.</title>
        <authorList>
            <person name="Chen L."/>
            <person name="Romero L."/>
            <person name="Chuang S.M."/>
            <person name="Tournier V."/>
            <person name="Joshi K.K."/>
            <person name="Lee J.A."/>
            <person name="Kovvali G."/>
            <person name="Madura K."/>
        </authorList>
    </citation>
    <scope>FUNCTION</scope>
    <scope>INTERACTION WITH STS1</scope>
</reference>
<reference key="10">
    <citation type="journal article" date="2012" name="Proc. Natl. Acad. Sci. U.S.A.">
        <title>Near-atomic resolution structural model of the yeast 26S proteasome.</title>
        <authorList>
            <person name="Beck F."/>
            <person name="Unverdorben P."/>
            <person name="Bohn S."/>
            <person name="Schweitzer A."/>
            <person name="Pfeifer G."/>
            <person name="Sakata E."/>
            <person name="Nickell S."/>
            <person name="Plitzko J.M."/>
            <person name="Villa E."/>
            <person name="Baumeister W."/>
            <person name="Forster F."/>
        </authorList>
    </citation>
    <scope>STRUCTURE BY ELECTRON MICROSCOPY (7.4 ANGSTROMS) OF THE 26S PROTEASOME</scope>
</reference>
<reference key="11">
    <citation type="journal article" date="2013" name="Proc. Natl. Acad. Sci. U.S.A.">
        <title>Structure of the 26S proteasome with ATP-gammaS bound provides insights into the mechanism of nucleotide-dependent substrate translocation.</title>
        <authorList>
            <person name="Sledz P."/>
            <person name="Unverdorben P."/>
            <person name="Beck F."/>
            <person name="Pfeifer G."/>
            <person name="Schweitzer A."/>
            <person name="Forster F."/>
            <person name="Baumeister W."/>
        </authorList>
    </citation>
    <scope>STRUCTURE BY ELECTRON MICROSCOPY (9.80 ANGSTROMS)</scope>
    <scope>IDENTIFICATION IN THE 26S PROTEASOME COMPLEX</scope>
</reference>
<reference key="12">
    <citation type="journal article" date="2013" name="Structure">
        <title>Formation of an intricate helical bundle dictates the assembly of the 26S proteasome lid.</title>
        <authorList>
            <person name="Estrin E."/>
            <person name="Lopez-Blanco J.R."/>
            <person name="Chacon P."/>
            <person name="Martin A."/>
        </authorList>
    </citation>
    <scope>STRUCTURE BY ELECTRON MICROSCOPY (9.80 ANGSTROMS)</scope>
    <scope>IDENTIFICATION IN THE 26S PROTEASOME COMPLEX</scope>
</reference>
<reference key="13">
    <citation type="journal article" date="2014" name="Nat. Struct. Mol. Biol.">
        <title>Structure of the Rpn11-Rpn8 dimer reveals mechanisms of substrate deubiquitination during proteasomal degradation.</title>
        <authorList>
            <person name="Worden E.J."/>
            <person name="Padovani C."/>
            <person name="Martin A."/>
        </authorList>
    </citation>
    <scope>X-RAY CRYSTALLOGRAPHY (1.95 ANGSTROMS) OF 2-239 IN COMPLEX WITH RPN8</scope>
    <scope>FUNCTION</scope>
</reference>
<protein>
    <recommendedName>
        <fullName>Ubiquitin carboxyl-terminal hydrolase RPN11</fullName>
        <ecNumber>3.4.19.12</ecNumber>
    </recommendedName>
    <alternativeName>
        <fullName>26S proteasome regulatory subunit RPN11</fullName>
    </alternativeName>
    <alternativeName>
        <fullName>Protein MPR1</fullName>
    </alternativeName>
</protein>
<comment type="function">
    <text evidence="3 6 9">Component of the lid subcomplex of the 26S proteasome, a multiprotein complex involved in the ATP-dependent degradation of ubiquitinated proteins. RPN11 is the only catalytically active member of the lid and serves as the essential deubiquitinase of the proteasome.</text>
</comment>
<comment type="catalytic activity">
    <reaction>
        <text>Thiol-dependent hydrolysis of ester, thioester, amide, peptide and isopeptide bonds formed by the C-terminal Gly of ubiquitin (a 76-residue protein attached to proteins as an intracellular targeting signal).</text>
        <dbReference type="EC" id="3.4.19.12"/>
    </reaction>
</comment>
<comment type="subunit">
    <text evidence="6 7 8 9">Component of the lid subcomplex of the 19S proteasome regulatory particle complex (also named PA700 complex). The 26S proteasome consists of a 20S proteasome core and two 19S regulatory subunits. Interacts directly with RPN8 and STS1.</text>
</comment>
<comment type="interaction">
    <interactant intactId="EBI-11219">
        <id>P43588</id>
    </interactant>
    <interactant intactId="EBI-13963">
        <id>P21242</id>
        <label>PRE10</label>
    </interactant>
    <organismsDiffer>false</organismsDiffer>
    <experiments>2</experiments>
</comment>
<comment type="interaction">
    <interactant intactId="EBI-11219">
        <id>P43588</id>
    </interactant>
    <interactant intactId="EBI-13955">
        <id>P40302</id>
        <label>PRE5</label>
    </interactant>
    <organismsDiffer>false</organismsDiffer>
    <experiments>2</experiments>
</comment>
<comment type="interaction">
    <interactant intactId="EBI-11219">
        <id>P43588</id>
    </interactant>
    <interactant intactId="EBI-13980">
        <id>P40303</id>
        <label>PRE6</label>
    </interactant>
    <organismsDiffer>false</organismsDiffer>
    <experiments>2</experiments>
</comment>
<comment type="interaction">
    <interactant intactId="EBI-11219">
        <id>P43588</id>
    </interactant>
    <interactant intactId="EBI-13959">
        <id>P23639</id>
        <label>PRE8</label>
    </interactant>
    <organismsDiffer>false</organismsDiffer>
    <experiments>2</experiments>
</comment>
<comment type="interaction">
    <interactant intactId="EBI-11219">
        <id>P43588</id>
    </interactant>
    <interactant intactId="EBI-13967">
        <id>P23638</id>
        <label>PRE9</label>
    </interactant>
    <organismsDiffer>false</organismsDiffer>
    <experiments>2</experiments>
</comment>
<comment type="interaction">
    <interactant intactId="EBI-11219">
        <id>P43588</id>
    </interactant>
    <interactant intactId="EBI-13971">
        <id>P32379</id>
        <label>PUP2</label>
    </interactant>
    <organismsDiffer>false</organismsDiffer>
    <experiments>2</experiments>
</comment>
<comment type="interaction">
    <interactant intactId="EBI-11219">
        <id>P43588</id>
    </interactant>
    <interactant intactId="EBI-15935">
        <id>Q12250</id>
        <label>RPN5</label>
    </interactant>
    <organismsDiffer>false</organismsDiffer>
    <experiments>8</experiments>
</comment>
<comment type="interaction">
    <interactant intactId="EBI-11219">
        <id>P43588</id>
    </interactant>
    <interactant intactId="EBI-36176">
        <id>Q08723</id>
        <label>RPN8</label>
    </interactant>
    <organismsDiffer>false</organismsDiffer>
    <experiments>10</experiments>
</comment>
<comment type="interaction">
    <interactant intactId="EBI-11219">
        <id>P43588</id>
    </interactant>
    <interactant intactId="EBI-15944">
        <id>Q04062</id>
        <label>RPN9</label>
    </interactant>
    <organismsDiffer>false</organismsDiffer>
    <experiments>6</experiments>
</comment>
<comment type="interaction">
    <interactant intactId="EBI-11219">
        <id>P43588</id>
    </interactant>
    <interactant intactId="EBI-13910">
        <id>P33299</id>
        <label>RPT1</label>
    </interactant>
    <organismsDiffer>false</organismsDiffer>
    <experiments>4</experiments>
</comment>
<comment type="interaction">
    <interactant intactId="EBI-11219">
        <id>P43588</id>
    </interactant>
    <interactant intactId="EBI-13901">
        <id>P40327</id>
        <label>RPT2</label>
    </interactant>
    <organismsDiffer>false</organismsDiffer>
    <experiments>3</experiments>
</comment>
<comment type="interaction">
    <interactant intactId="EBI-11219">
        <id>P43588</id>
    </interactant>
    <interactant intactId="EBI-13905">
        <id>P33298</id>
        <label>RPT3</label>
    </interactant>
    <organismsDiffer>false</organismsDiffer>
    <experiments>4</experiments>
</comment>
<comment type="interaction">
    <interactant intactId="EBI-11219">
        <id>P43588</id>
    </interactant>
    <interactant intactId="EBI-18520">
        <id>P53549</id>
        <label>RPT4</label>
    </interactant>
    <organismsDiffer>false</organismsDiffer>
    <experiments>4</experiments>
</comment>
<comment type="interaction">
    <interactant intactId="EBI-11219">
        <id>P43588</id>
    </interactant>
    <interactant intactId="EBI-13920">
        <id>P33297</id>
        <label>RPT5</label>
    </interactant>
    <organismsDiffer>false</organismsDiffer>
    <experiments>2</experiments>
</comment>
<comment type="interaction">
    <interactant intactId="EBI-11219">
        <id>P43588</id>
    </interactant>
    <interactant intactId="EBI-13914">
        <id>Q01939</id>
        <label>RPT6</label>
    </interactant>
    <organismsDiffer>false</organismsDiffer>
    <experiments>3</experiments>
</comment>
<comment type="interaction">
    <interactant intactId="EBI-11219">
        <id>P43588</id>
    </interactant>
    <interactant intactId="EBI-13975">
        <id>P21243</id>
        <label>SCL1</label>
    </interactant>
    <organismsDiffer>false</organismsDiffer>
    <experiments>2</experiments>
</comment>
<comment type="domain">
    <text evidence="3">The JAMM motif is required for the deubiquitination and degradation of ubiquitinated substrates.</text>
</comment>
<comment type="PTM">
    <text evidence="4">N-acetylated by NAT3.</text>
</comment>
<comment type="miscellaneous">
    <text evidence="5">Present with 16400 molecules/cell in log phase SD medium.</text>
</comment>
<comment type="similarity">
    <text evidence="10">Belongs to the peptidase M67A family.</text>
</comment>
<accession>P43588</accession>
<accession>D6VTN4</accession>
<accession>Q8J0T5</accession>